<organism>
    <name type="scientific">Dinoponera quadriceps</name>
    <name type="common">South American ant</name>
    <dbReference type="NCBI Taxonomy" id="609295"/>
    <lineage>
        <taxon>Eukaryota</taxon>
        <taxon>Metazoa</taxon>
        <taxon>Ecdysozoa</taxon>
        <taxon>Arthropoda</taxon>
        <taxon>Hexapoda</taxon>
        <taxon>Insecta</taxon>
        <taxon>Pterygota</taxon>
        <taxon>Neoptera</taxon>
        <taxon>Endopterygota</taxon>
        <taxon>Hymenoptera</taxon>
        <taxon>Apocrita</taxon>
        <taxon>Aculeata</taxon>
        <taxon>Formicoidea</taxon>
        <taxon>Formicidae</taxon>
        <taxon>Ponerinae</taxon>
        <taxon>Ponerini</taxon>
        <taxon>Dinoponera</taxon>
    </lineage>
</organism>
<protein>
    <recommendedName>
        <fullName evidence="3">U1-poneritoxin-Dq2c</fullName>
        <shortName evidence="3">U1-PONTX-Dq2c</shortName>
    </recommendedName>
    <alternativeName>
        <fullName evidence="2">Peptide Dq-1289</fullName>
    </alternativeName>
    <alternativeName>
        <fullName evidence="4">Poneratoxin</fullName>
    </alternativeName>
    <component>
        <recommendedName>
            <fullName evidence="3">U1-poneritoxin-Dq2a</fullName>
            <shortName evidence="3">U1-PONTX-Dq2a</shortName>
        </recommendedName>
        <alternativeName>
            <fullName evidence="2">Peptide Dq-1061</fullName>
        </alternativeName>
    </component>
</protein>
<dbReference type="Proteomes" id="UP000515204">
    <property type="component" value="Unplaced"/>
</dbReference>
<dbReference type="GO" id="GO:0005576">
    <property type="term" value="C:extracellular region"/>
    <property type="evidence" value="ECO:0007669"/>
    <property type="project" value="UniProtKB-SubCell"/>
</dbReference>
<evidence type="ECO:0000269" key="1">
    <source>
    </source>
</evidence>
<evidence type="ECO:0000303" key="2">
    <source>
    </source>
</evidence>
<evidence type="ECO:0000303" key="3">
    <source>
    </source>
</evidence>
<evidence type="ECO:0000305" key="4"/>
<evidence type="ECO:0000305" key="5">
    <source>
    </source>
</evidence>
<keyword id="KW-0929">Antimicrobial</keyword>
<keyword id="KW-0903">Direct protein sequencing</keyword>
<keyword id="KW-1185">Reference proteome</keyword>
<keyword id="KW-0964">Secreted</keyword>
<reference key="1">
    <citation type="journal article" date="2013" name="J. Proteomics">
        <title>Peptidomic comparison and characterization of the major components of the venom of the giant ant Dinoponera quadriceps collected in four different areas of Brazil.</title>
        <authorList>
            <person name="Cologna C.T."/>
            <person name="Cardoso Jdos S."/>
            <person name="Jourdan E."/>
            <person name="Degueldre M."/>
            <person name="Upert G."/>
            <person name="Gilles N."/>
            <person name="Uetanabaro A.P."/>
            <person name="Costa Neto E.M."/>
            <person name="Thonart P."/>
            <person name="de Pauw E."/>
            <person name="Quinton L."/>
        </authorList>
    </citation>
    <scope>PROTEIN SEQUENCE</scope>
    <scope>SUBCELLULAR LOCATION</scope>
    <scope>MASS SPECTROMETRY</scope>
    <source>
        <tissue>Venom</tissue>
    </source>
</reference>
<reference key="2">
    <citation type="journal article" date="2016" name="Toxins">
        <title>The biochemical toxin arsenal from ant venoms.</title>
        <authorList>
            <person name="Touchard A."/>
            <person name="Aili S.R."/>
            <person name="Fox E.G."/>
            <person name="Escoubas P."/>
            <person name="Orivel J."/>
            <person name="Nicholson G.M."/>
            <person name="Dejean A."/>
        </authorList>
    </citation>
    <scope>REVIEW</scope>
    <scope>NOMENCLATURE</scope>
</reference>
<feature type="peptide" id="PRO_0000430030" description="U1-poneritoxin-Dq2c" evidence="1">
    <location>
        <begin position="1"/>
        <end position="11"/>
    </location>
</feature>
<feature type="peptide" id="PRO_0000430031" description="U1-poneritoxin-Dq2a" evidence="1">
    <location>
        <begin position="3"/>
        <end position="11"/>
    </location>
</feature>
<feature type="unsure residue" description="L or I" evidence="1">
    <location>
        <position position="5"/>
    </location>
</feature>
<feature type="unsure residue" description="L or I" evidence="1">
    <location>
        <position position="8"/>
    </location>
</feature>
<feature type="unsure residue" description="L or I" evidence="1">
    <location>
        <position position="9"/>
    </location>
</feature>
<feature type="unsure residue" description="L or I" evidence="1">
    <location>
        <position position="10"/>
    </location>
</feature>
<feature type="unsure residue" description="L or I" evidence="1">
    <location>
        <position position="11"/>
    </location>
</feature>
<sequence length="11" mass="1290">RAHFLPPLLLL</sequence>
<name>TX2AC_DINQU</name>
<proteinExistence type="evidence at protein level"/>
<comment type="function">
    <molecule>U1-poneritoxin-Dq2c</molecule>
    <text evidence="4">May have antimicrobial properties, like most ant linear peptides.</text>
</comment>
<comment type="function">
    <molecule>U1-poneritoxin-Dq2a</molecule>
    <text evidence="4">May have antimicrobial properties, like most ant linear peptides.</text>
</comment>
<comment type="subcellular location">
    <subcellularLocation>
        <location evidence="1">Secreted</location>
    </subcellularLocation>
</comment>
<comment type="tissue specificity">
    <text evidence="5">Expressed by the venom gland.</text>
</comment>
<comment type="mass spectrometry" mass="1289.8" method="Electrospray" evidence="1">
    <molecule>U1-poneritoxin-Dq2c</molecule>
    <text>U1-PONTX-Dq2c.</text>
</comment>
<comment type="mass spectrometry" mass="1062.6" method="Electrospray" evidence="1">
    <molecule>U1-poneritoxin-Dq2a</molecule>
    <text>U1-PONTX-Dq2a.</text>
</comment>
<accession>C0HJK4</accession>